<proteinExistence type="inferred from homology"/>
<keyword id="KW-0687">Ribonucleoprotein</keyword>
<keyword id="KW-0689">Ribosomal protein</keyword>
<keyword id="KW-0694">RNA-binding</keyword>
<keyword id="KW-0699">rRNA-binding</keyword>
<protein>
    <recommendedName>
        <fullName evidence="1">Large ribosomal subunit protein uL15</fullName>
    </recommendedName>
    <alternativeName>
        <fullName evidence="3">50S ribosomal protein L15</fullName>
    </alternativeName>
</protein>
<evidence type="ECO:0000255" key="1">
    <source>
        <dbReference type="HAMAP-Rule" id="MF_01341"/>
    </source>
</evidence>
<evidence type="ECO:0000256" key="2">
    <source>
        <dbReference type="SAM" id="MobiDB-lite"/>
    </source>
</evidence>
<evidence type="ECO:0000305" key="3"/>
<sequence length="144" mass="15154">MRLNTLSPAEGAKHAPKRVGRGIGSGLGKTGGRGHKGQKSRSGGGVRRGFEGGQIPLYRRLPKFGFTSRKAMITAEVRLSELALVEGDVIDLNTLKAANVVGIQIEFVKVILSGEVARPVTLRGLRVTKGARAAIEAAGGKIEE</sequence>
<reference key="1">
    <citation type="journal article" date="1994" name="DNA Res.">
        <title>Cloning and characterization of the ribosomal protein genes in the spc operon of a prokaryotic endosymbiont of the pea aphid, Acyrthosiphon kondoi.</title>
        <authorList>
            <person name="Abe R."/>
            <person name="Yamashita A."/>
            <person name="Isono K."/>
        </authorList>
    </citation>
    <scope>NUCLEOTIDE SEQUENCE [GENOMIC DNA]</scope>
    <source>
        <strain>Kurashiki</strain>
    </source>
</reference>
<dbReference type="EMBL" id="D31786">
    <property type="protein sequence ID" value="BAA06594.1"/>
    <property type="molecule type" value="Genomic_DNA"/>
</dbReference>
<dbReference type="EMBL" id="D16555">
    <property type="protein sequence ID" value="BAA03986.1"/>
    <property type="molecule type" value="Genomic_DNA"/>
</dbReference>
<dbReference type="PIR" id="JC2272">
    <property type="entry name" value="JC2272"/>
</dbReference>
<dbReference type="SMR" id="P46185"/>
<dbReference type="GO" id="GO:0022625">
    <property type="term" value="C:cytosolic large ribosomal subunit"/>
    <property type="evidence" value="ECO:0007669"/>
    <property type="project" value="TreeGrafter"/>
</dbReference>
<dbReference type="GO" id="GO:0019843">
    <property type="term" value="F:rRNA binding"/>
    <property type="evidence" value="ECO:0007669"/>
    <property type="project" value="UniProtKB-UniRule"/>
</dbReference>
<dbReference type="GO" id="GO:0003735">
    <property type="term" value="F:structural constituent of ribosome"/>
    <property type="evidence" value="ECO:0007669"/>
    <property type="project" value="InterPro"/>
</dbReference>
<dbReference type="GO" id="GO:0006412">
    <property type="term" value="P:translation"/>
    <property type="evidence" value="ECO:0007669"/>
    <property type="project" value="UniProtKB-UniRule"/>
</dbReference>
<dbReference type="FunFam" id="3.100.10.10:FF:000003">
    <property type="entry name" value="50S ribosomal protein L15"/>
    <property type="match status" value="1"/>
</dbReference>
<dbReference type="Gene3D" id="3.100.10.10">
    <property type="match status" value="1"/>
</dbReference>
<dbReference type="HAMAP" id="MF_01341">
    <property type="entry name" value="Ribosomal_uL15"/>
    <property type="match status" value="1"/>
</dbReference>
<dbReference type="InterPro" id="IPR030878">
    <property type="entry name" value="Ribosomal_uL15"/>
</dbReference>
<dbReference type="InterPro" id="IPR021131">
    <property type="entry name" value="Ribosomal_uL15/eL18"/>
</dbReference>
<dbReference type="InterPro" id="IPR036227">
    <property type="entry name" value="Ribosomal_uL15/eL18_sf"/>
</dbReference>
<dbReference type="InterPro" id="IPR005749">
    <property type="entry name" value="Ribosomal_uL15_bac-type"/>
</dbReference>
<dbReference type="InterPro" id="IPR001196">
    <property type="entry name" value="Ribosomal_uL15_CS"/>
</dbReference>
<dbReference type="NCBIfam" id="TIGR01071">
    <property type="entry name" value="rplO_bact"/>
    <property type="match status" value="1"/>
</dbReference>
<dbReference type="PANTHER" id="PTHR12934">
    <property type="entry name" value="50S RIBOSOMAL PROTEIN L15"/>
    <property type="match status" value="1"/>
</dbReference>
<dbReference type="PANTHER" id="PTHR12934:SF11">
    <property type="entry name" value="LARGE RIBOSOMAL SUBUNIT PROTEIN UL15M"/>
    <property type="match status" value="1"/>
</dbReference>
<dbReference type="Pfam" id="PF00828">
    <property type="entry name" value="Ribosomal_L27A"/>
    <property type="match status" value="1"/>
</dbReference>
<dbReference type="SUPFAM" id="SSF52080">
    <property type="entry name" value="Ribosomal proteins L15p and L18e"/>
    <property type="match status" value="1"/>
</dbReference>
<dbReference type="PROSITE" id="PS00475">
    <property type="entry name" value="RIBOSOMAL_L15"/>
    <property type="match status" value="1"/>
</dbReference>
<comment type="function">
    <text evidence="1">Binds to the 23S rRNA.</text>
</comment>
<comment type="subunit">
    <text evidence="1">Part of the 50S ribosomal subunit.</text>
</comment>
<comment type="similarity">
    <text evidence="1">Belongs to the universal ribosomal protein uL15 family.</text>
</comment>
<organism>
    <name type="scientific">Buchnera aphidicola subsp. Acyrthosiphon kondoi</name>
    <name type="common">Acyrthosiphon kondoi symbiotic bacterium</name>
    <dbReference type="NCBI Taxonomy" id="42474"/>
    <lineage>
        <taxon>Bacteria</taxon>
        <taxon>Pseudomonadati</taxon>
        <taxon>Pseudomonadota</taxon>
        <taxon>Gammaproteobacteria</taxon>
        <taxon>Enterobacterales</taxon>
        <taxon>Erwiniaceae</taxon>
        <taxon>Buchnera</taxon>
    </lineage>
</organism>
<name>RL15_BUCAK</name>
<accession>P46185</accession>
<feature type="chain" id="PRO_0000104693" description="Large ribosomal subunit protein uL15">
    <location>
        <begin position="1"/>
        <end position="144"/>
    </location>
</feature>
<feature type="region of interest" description="Disordered" evidence="2">
    <location>
        <begin position="1"/>
        <end position="52"/>
    </location>
</feature>
<feature type="compositionally biased region" description="Gly residues" evidence="2">
    <location>
        <begin position="21"/>
        <end position="31"/>
    </location>
</feature>
<gene>
    <name evidence="1" type="primary">rplO</name>
</gene>